<sequence>MASAELDYSIEIPDQPCWSQKNRQGGKEAGKQQPVVILLGWGGCRDKNLAKYSAIYHKRGCIVIRYTAPWHMVFFSESLGIPSLRVIAQKLLELLFDYEIEREPLLFHVFSNAGVMLYRYVLELLQTHQRFRHLHVVGTIFDSGPGDSNLIGALRALATILERRPAVLRLLLLAAFALVVILFHFLLAPFTALFHTHFYDRLQDSGSCWPELYLYSRADKVVSARDVERMVEARLAHQVMVRGVDFVSSAHVSHLRDYPTYYTSLCVDFMHNCVQC</sequence>
<dbReference type="EMBL" id="AK004164">
    <property type="protein sequence ID" value="BAB23200.1"/>
    <property type="molecule type" value="mRNA"/>
</dbReference>
<dbReference type="EMBL" id="AK005885">
    <property type="protein sequence ID" value="BAB24300.1"/>
    <property type="molecule type" value="mRNA"/>
</dbReference>
<dbReference type="EMBL" id="AL671866">
    <property type="status" value="NOT_ANNOTATED_CDS"/>
    <property type="molecule type" value="Genomic_DNA"/>
</dbReference>
<dbReference type="EMBL" id="AL844169">
    <property type="status" value="NOT_ANNOTATED_CDS"/>
    <property type="molecule type" value="Genomic_DNA"/>
</dbReference>
<dbReference type="EMBL" id="BC019937">
    <property type="protein sequence ID" value="AAH19937.1"/>
    <property type="molecule type" value="mRNA"/>
</dbReference>
<dbReference type="EMBL" id="BC020121">
    <property type="protein sequence ID" value="AAH20121.1"/>
    <property type="molecule type" value="mRNA"/>
</dbReference>
<dbReference type="CCDS" id="CCDS18533.1">
    <molecule id="Q9D0Z3-1"/>
</dbReference>
<dbReference type="CCDS" id="CCDS71453.1">
    <molecule id="Q9D0Z3-2"/>
</dbReference>
<dbReference type="CCDS" id="CCDS71454.1">
    <molecule id="Q9D0Z3-3"/>
</dbReference>
<dbReference type="RefSeq" id="NP_001272741.1">
    <molecule id="Q9D0Z3-2"/>
    <property type="nucleotide sequence ID" value="NM_001285812.1"/>
</dbReference>
<dbReference type="RefSeq" id="NP_001272743.1">
    <molecule id="Q9D0Z3-3"/>
    <property type="nucleotide sequence ID" value="NM_001285814.1"/>
</dbReference>
<dbReference type="RefSeq" id="NP_001272744.1">
    <property type="nucleotide sequence ID" value="NM_001285815.1"/>
</dbReference>
<dbReference type="RefSeq" id="NP_001272745.1">
    <property type="nucleotide sequence ID" value="NM_001285816.1"/>
</dbReference>
<dbReference type="RefSeq" id="NP_081113.1">
    <molecule id="Q9D0Z3-1"/>
    <property type="nucleotide sequence ID" value="NM_026837.3"/>
</dbReference>
<dbReference type="RefSeq" id="NP_083865.1">
    <molecule id="Q9D0Z3-3"/>
    <property type="nucleotide sequence ID" value="NM_029589.1"/>
</dbReference>
<dbReference type="SMR" id="Q9D0Z3"/>
<dbReference type="BioGRID" id="213046">
    <property type="interactions" value="2"/>
</dbReference>
<dbReference type="FunCoup" id="Q9D0Z3">
    <property type="interactions" value="438"/>
</dbReference>
<dbReference type="STRING" id="10090.ENSMUSP00000102042"/>
<dbReference type="ESTHER" id="mouse-tmm53">
    <property type="family name" value="Duf_829"/>
</dbReference>
<dbReference type="iPTMnet" id="Q9D0Z3"/>
<dbReference type="PhosphoSitePlus" id="Q9D0Z3"/>
<dbReference type="SwissPalm" id="Q9D0Z3"/>
<dbReference type="PaxDb" id="10090-ENSMUSP00000061523"/>
<dbReference type="ProteomicsDB" id="259259">
    <molecule id="Q9D0Z3-1"/>
</dbReference>
<dbReference type="ProteomicsDB" id="259260">
    <molecule id="Q9D0Z3-2"/>
</dbReference>
<dbReference type="ProteomicsDB" id="259261">
    <molecule id="Q9D0Z3-3"/>
</dbReference>
<dbReference type="Pumba" id="Q9D0Z3"/>
<dbReference type="Antibodypedia" id="18471">
    <property type="antibodies" value="49 antibodies from 12 providers"/>
</dbReference>
<dbReference type="DNASU" id="68777"/>
<dbReference type="Ensembl" id="ENSMUST00000062824.12">
    <molecule id="Q9D0Z3-1"/>
    <property type="protein sequence ID" value="ENSMUSP00000061523.6"/>
    <property type="gene ID" value="ENSMUSG00000048772.16"/>
</dbReference>
<dbReference type="Ensembl" id="ENSMUST00000106433.2">
    <molecule id="Q9D0Z3-3"/>
    <property type="protein sequence ID" value="ENSMUSP00000102041.2"/>
    <property type="gene ID" value="ENSMUSG00000048772.16"/>
</dbReference>
<dbReference type="Ensembl" id="ENSMUST00000106434.8">
    <molecule id="Q9D0Z3-2"/>
    <property type="protein sequence ID" value="ENSMUSP00000102042.2"/>
    <property type="gene ID" value="ENSMUSG00000048772.16"/>
</dbReference>
<dbReference type="GeneID" id="68777"/>
<dbReference type="KEGG" id="mmu:68777"/>
<dbReference type="UCSC" id="uc008uii.2">
    <molecule id="Q9D0Z3-1"/>
    <property type="organism name" value="mouse"/>
</dbReference>
<dbReference type="UCSC" id="uc008uij.2">
    <molecule id="Q9D0Z3-2"/>
    <property type="organism name" value="mouse"/>
</dbReference>
<dbReference type="UCSC" id="uc008uik.2">
    <molecule id="Q9D0Z3-3"/>
    <property type="organism name" value="mouse"/>
</dbReference>
<dbReference type="AGR" id="MGI:1916027"/>
<dbReference type="CTD" id="79639"/>
<dbReference type="MGI" id="MGI:1916027">
    <property type="gene designation" value="Tmem53"/>
</dbReference>
<dbReference type="VEuPathDB" id="HostDB:ENSMUSG00000048772"/>
<dbReference type="eggNOG" id="KOG2521">
    <property type="taxonomic scope" value="Eukaryota"/>
</dbReference>
<dbReference type="GeneTree" id="ENSGT00390000000715"/>
<dbReference type="HOGENOM" id="CLU_036503_1_0_1"/>
<dbReference type="InParanoid" id="Q9D0Z3"/>
<dbReference type="OMA" id="VECLFWR"/>
<dbReference type="OrthoDB" id="72404at9989"/>
<dbReference type="PhylomeDB" id="Q9D0Z3"/>
<dbReference type="TreeFam" id="TF313176"/>
<dbReference type="BioGRID-ORCS" id="68777">
    <property type="hits" value="2 hits in 77 CRISPR screens"/>
</dbReference>
<dbReference type="ChiTaRS" id="Tmem53">
    <property type="organism name" value="mouse"/>
</dbReference>
<dbReference type="PRO" id="PR:Q9D0Z3"/>
<dbReference type="Proteomes" id="UP000000589">
    <property type="component" value="Chromosome 4"/>
</dbReference>
<dbReference type="RNAct" id="Q9D0Z3">
    <property type="molecule type" value="protein"/>
</dbReference>
<dbReference type="Bgee" id="ENSMUSG00000048772">
    <property type="expression patterns" value="Expressed in seminiferous tubule of testis and 115 other cell types or tissues"/>
</dbReference>
<dbReference type="ExpressionAtlas" id="Q9D0Z3">
    <property type="expression patterns" value="baseline and differential"/>
</dbReference>
<dbReference type="GO" id="GO:0031965">
    <property type="term" value="C:nuclear membrane"/>
    <property type="evidence" value="ECO:0000250"/>
    <property type="project" value="UniProtKB"/>
</dbReference>
<dbReference type="GO" id="GO:0005640">
    <property type="term" value="C:nuclear outer membrane"/>
    <property type="evidence" value="ECO:0000314"/>
    <property type="project" value="UniProtKB"/>
</dbReference>
<dbReference type="GO" id="GO:0030514">
    <property type="term" value="P:negative regulation of BMP signaling pathway"/>
    <property type="evidence" value="ECO:0000315"/>
    <property type="project" value="UniProtKB"/>
</dbReference>
<dbReference type="GO" id="GO:0030279">
    <property type="term" value="P:negative regulation of ossification"/>
    <property type="evidence" value="ECO:0000315"/>
    <property type="project" value="UniProtKB"/>
</dbReference>
<dbReference type="GO" id="GO:0045668">
    <property type="term" value="P:negative regulation of osteoblast differentiation"/>
    <property type="evidence" value="ECO:0000315"/>
    <property type="project" value="UniProtKB"/>
</dbReference>
<dbReference type="GO" id="GO:0046822">
    <property type="term" value="P:regulation of nucleocytoplasmic transport"/>
    <property type="evidence" value="ECO:0000315"/>
    <property type="project" value="UniProtKB"/>
</dbReference>
<dbReference type="Gene3D" id="3.40.50.1820">
    <property type="entry name" value="alpha/beta hydrolase"/>
    <property type="match status" value="1"/>
</dbReference>
<dbReference type="InterPro" id="IPR029058">
    <property type="entry name" value="AB_hydrolase_fold"/>
</dbReference>
<dbReference type="InterPro" id="IPR008547">
    <property type="entry name" value="DUF829_TMEM53"/>
</dbReference>
<dbReference type="PANTHER" id="PTHR12265">
    <property type="entry name" value="TRANSMEMBRANE PROTEIN 53"/>
    <property type="match status" value="1"/>
</dbReference>
<dbReference type="PANTHER" id="PTHR12265:SF30">
    <property type="entry name" value="TRANSMEMBRANE PROTEIN 53"/>
    <property type="match status" value="1"/>
</dbReference>
<dbReference type="Pfam" id="PF05705">
    <property type="entry name" value="DUF829"/>
    <property type="match status" value="1"/>
</dbReference>
<dbReference type="SUPFAM" id="SSF53474">
    <property type="entry name" value="alpha/beta-Hydrolases"/>
    <property type="match status" value="1"/>
</dbReference>
<gene>
    <name type="primary">Tmem53</name>
    <name evidence="5 8" type="synonym">Net4</name>
</gene>
<reference key="1">
    <citation type="journal article" date="2005" name="Science">
        <title>The transcriptional landscape of the mammalian genome.</title>
        <authorList>
            <person name="Carninci P."/>
            <person name="Kasukawa T."/>
            <person name="Katayama S."/>
            <person name="Gough J."/>
            <person name="Frith M.C."/>
            <person name="Maeda N."/>
            <person name="Oyama R."/>
            <person name="Ravasi T."/>
            <person name="Lenhard B."/>
            <person name="Wells C."/>
            <person name="Kodzius R."/>
            <person name="Shimokawa K."/>
            <person name="Bajic V.B."/>
            <person name="Brenner S.E."/>
            <person name="Batalov S."/>
            <person name="Forrest A.R."/>
            <person name="Zavolan M."/>
            <person name="Davis M.J."/>
            <person name="Wilming L.G."/>
            <person name="Aidinis V."/>
            <person name="Allen J.E."/>
            <person name="Ambesi-Impiombato A."/>
            <person name="Apweiler R."/>
            <person name="Aturaliya R.N."/>
            <person name="Bailey T.L."/>
            <person name="Bansal M."/>
            <person name="Baxter L."/>
            <person name="Beisel K.W."/>
            <person name="Bersano T."/>
            <person name="Bono H."/>
            <person name="Chalk A.M."/>
            <person name="Chiu K.P."/>
            <person name="Choudhary V."/>
            <person name="Christoffels A."/>
            <person name="Clutterbuck D.R."/>
            <person name="Crowe M.L."/>
            <person name="Dalla E."/>
            <person name="Dalrymple B.P."/>
            <person name="de Bono B."/>
            <person name="Della Gatta G."/>
            <person name="di Bernardo D."/>
            <person name="Down T."/>
            <person name="Engstrom P."/>
            <person name="Fagiolini M."/>
            <person name="Faulkner G."/>
            <person name="Fletcher C.F."/>
            <person name="Fukushima T."/>
            <person name="Furuno M."/>
            <person name="Futaki S."/>
            <person name="Gariboldi M."/>
            <person name="Georgii-Hemming P."/>
            <person name="Gingeras T.R."/>
            <person name="Gojobori T."/>
            <person name="Green R.E."/>
            <person name="Gustincich S."/>
            <person name="Harbers M."/>
            <person name="Hayashi Y."/>
            <person name="Hensch T.K."/>
            <person name="Hirokawa N."/>
            <person name="Hill D."/>
            <person name="Huminiecki L."/>
            <person name="Iacono M."/>
            <person name="Ikeo K."/>
            <person name="Iwama A."/>
            <person name="Ishikawa T."/>
            <person name="Jakt M."/>
            <person name="Kanapin A."/>
            <person name="Katoh M."/>
            <person name="Kawasawa Y."/>
            <person name="Kelso J."/>
            <person name="Kitamura H."/>
            <person name="Kitano H."/>
            <person name="Kollias G."/>
            <person name="Krishnan S.P."/>
            <person name="Kruger A."/>
            <person name="Kummerfeld S.K."/>
            <person name="Kurochkin I.V."/>
            <person name="Lareau L.F."/>
            <person name="Lazarevic D."/>
            <person name="Lipovich L."/>
            <person name="Liu J."/>
            <person name="Liuni S."/>
            <person name="McWilliam S."/>
            <person name="Madan Babu M."/>
            <person name="Madera M."/>
            <person name="Marchionni L."/>
            <person name="Matsuda H."/>
            <person name="Matsuzawa S."/>
            <person name="Miki H."/>
            <person name="Mignone F."/>
            <person name="Miyake S."/>
            <person name="Morris K."/>
            <person name="Mottagui-Tabar S."/>
            <person name="Mulder N."/>
            <person name="Nakano N."/>
            <person name="Nakauchi H."/>
            <person name="Ng P."/>
            <person name="Nilsson R."/>
            <person name="Nishiguchi S."/>
            <person name="Nishikawa S."/>
            <person name="Nori F."/>
            <person name="Ohara O."/>
            <person name="Okazaki Y."/>
            <person name="Orlando V."/>
            <person name="Pang K.C."/>
            <person name="Pavan W.J."/>
            <person name="Pavesi G."/>
            <person name="Pesole G."/>
            <person name="Petrovsky N."/>
            <person name="Piazza S."/>
            <person name="Reed J."/>
            <person name="Reid J.F."/>
            <person name="Ring B.Z."/>
            <person name="Ringwald M."/>
            <person name="Rost B."/>
            <person name="Ruan Y."/>
            <person name="Salzberg S.L."/>
            <person name="Sandelin A."/>
            <person name="Schneider C."/>
            <person name="Schoenbach C."/>
            <person name="Sekiguchi K."/>
            <person name="Semple C.A."/>
            <person name="Seno S."/>
            <person name="Sessa L."/>
            <person name="Sheng Y."/>
            <person name="Shibata Y."/>
            <person name="Shimada H."/>
            <person name="Shimada K."/>
            <person name="Silva D."/>
            <person name="Sinclair B."/>
            <person name="Sperling S."/>
            <person name="Stupka E."/>
            <person name="Sugiura K."/>
            <person name="Sultana R."/>
            <person name="Takenaka Y."/>
            <person name="Taki K."/>
            <person name="Tammoja K."/>
            <person name="Tan S.L."/>
            <person name="Tang S."/>
            <person name="Taylor M.S."/>
            <person name="Tegner J."/>
            <person name="Teichmann S.A."/>
            <person name="Ueda H.R."/>
            <person name="van Nimwegen E."/>
            <person name="Verardo R."/>
            <person name="Wei C.L."/>
            <person name="Yagi K."/>
            <person name="Yamanishi H."/>
            <person name="Zabarovsky E."/>
            <person name="Zhu S."/>
            <person name="Zimmer A."/>
            <person name="Hide W."/>
            <person name="Bult C."/>
            <person name="Grimmond S.M."/>
            <person name="Teasdale R.D."/>
            <person name="Liu E.T."/>
            <person name="Brusic V."/>
            <person name="Quackenbush J."/>
            <person name="Wahlestedt C."/>
            <person name="Mattick J.S."/>
            <person name="Hume D.A."/>
            <person name="Kai C."/>
            <person name="Sasaki D."/>
            <person name="Tomaru Y."/>
            <person name="Fukuda S."/>
            <person name="Kanamori-Katayama M."/>
            <person name="Suzuki M."/>
            <person name="Aoki J."/>
            <person name="Arakawa T."/>
            <person name="Iida J."/>
            <person name="Imamura K."/>
            <person name="Itoh M."/>
            <person name="Kato T."/>
            <person name="Kawaji H."/>
            <person name="Kawagashira N."/>
            <person name="Kawashima T."/>
            <person name="Kojima M."/>
            <person name="Kondo S."/>
            <person name="Konno H."/>
            <person name="Nakano K."/>
            <person name="Ninomiya N."/>
            <person name="Nishio T."/>
            <person name="Okada M."/>
            <person name="Plessy C."/>
            <person name="Shibata K."/>
            <person name="Shiraki T."/>
            <person name="Suzuki S."/>
            <person name="Tagami M."/>
            <person name="Waki K."/>
            <person name="Watahiki A."/>
            <person name="Okamura-Oho Y."/>
            <person name="Suzuki H."/>
            <person name="Kawai J."/>
            <person name="Hayashizaki Y."/>
        </authorList>
    </citation>
    <scope>NUCLEOTIDE SEQUENCE [LARGE SCALE MRNA] (ISOFORMS 1 AND 3)</scope>
    <source>
        <strain>C57BL/6J</strain>
        <tissue>Embryo</tissue>
        <tissue>Testis</tissue>
    </source>
</reference>
<reference key="2">
    <citation type="journal article" date="2009" name="PLoS Biol.">
        <title>Lineage-specific biology revealed by a finished genome assembly of the mouse.</title>
        <authorList>
            <person name="Church D.M."/>
            <person name="Goodstadt L."/>
            <person name="Hillier L.W."/>
            <person name="Zody M.C."/>
            <person name="Goldstein S."/>
            <person name="She X."/>
            <person name="Bult C.J."/>
            <person name="Agarwala R."/>
            <person name="Cherry J.L."/>
            <person name="DiCuccio M."/>
            <person name="Hlavina W."/>
            <person name="Kapustin Y."/>
            <person name="Meric P."/>
            <person name="Maglott D."/>
            <person name="Birtle Z."/>
            <person name="Marques A.C."/>
            <person name="Graves T."/>
            <person name="Zhou S."/>
            <person name="Teague B."/>
            <person name="Potamousis K."/>
            <person name="Churas C."/>
            <person name="Place M."/>
            <person name="Herschleb J."/>
            <person name="Runnheim R."/>
            <person name="Forrest D."/>
            <person name="Amos-Landgraf J."/>
            <person name="Schwartz D.C."/>
            <person name="Cheng Z."/>
            <person name="Lindblad-Toh K."/>
            <person name="Eichler E.E."/>
            <person name="Ponting C.P."/>
        </authorList>
    </citation>
    <scope>NUCLEOTIDE SEQUENCE [LARGE SCALE GENOMIC DNA]</scope>
    <source>
        <strain>C57BL/6J</strain>
    </source>
</reference>
<reference key="3">
    <citation type="journal article" date="2004" name="Genome Res.">
        <title>The status, quality, and expansion of the NIH full-length cDNA project: the Mammalian Gene Collection (MGC).</title>
        <authorList>
            <consortium name="The MGC Project Team"/>
        </authorList>
    </citation>
    <scope>NUCLEOTIDE SEQUENCE [LARGE SCALE MRNA] (ISOFORMS 1 AND 2)</scope>
    <source>
        <strain>Czech II</strain>
        <tissue>Mammary tumor</tissue>
    </source>
</reference>
<reference key="4">
    <citation type="journal article" date="2003" name="Science">
        <title>Nuclear membrane proteins with potential disease links found by subtractive proteomics.</title>
        <authorList>
            <person name="Schirmer E.C."/>
            <person name="Florens L."/>
            <person name="Guan T."/>
            <person name="Yates J.R. III"/>
            <person name="Gerace L."/>
        </authorList>
    </citation>
    <scope>SUBCELLULAR LOCATION</scope>
    <scope>TISSUE SPECIFICITY</scope>
</reference>
<reference key="5">
    <citation type="journal article" date="2010" name="Cell. Mol. Life Sci.">
        <title>Cell-specific and lamin-dependent targeting of novel transmembrane proteins in the nuclear envelope.</title>
        <authorList>
            <person name="Malik P."/>
            <person name="Korfali N."/>
            <person name="Srsen V."/>
            <person name="Lazou V."/>
            <person name="Batrakou D.G."/>
            <person name="Zuleger N."/>
            <person name="Kavanagh D.M."/>
            <person name="Wilkie G.S."/>
            <person name="Goldberg M.W."/>
            <person name="Schirmer E.C."/>
        </authorList>
    </citation>
    <scope>SUBCELLULAR LOCATION</scope>
</reference>
<reference key="6">
    <citation type="journal article" date="2021" name="Nat. Commun.">
        <title>Deficiency of TMEM53 causes a previously unknown sclerosing bone disorder by dysregulation of BMP-SMAD signaling.</title>
        <authorList>
            <person name="Guo L."/>
            <person name="Iida A."/>
            <person name="Bhavani G.S."/>
            <person name="Gowrishankar K."/>
            <person name="Wang Z."/>
            <person name="Xue J.Y."/>
            <person name="Wang J."/>
            <person name="Miyake N."/>
            <person name="Matsumoto N."/>
            <person name="Hasegawa T."/>
            <person name="Iizuka Y."/>
            <person name="Matsuda M."/>
            <person name="Nakashima T."/>
            <person name="Takechi M."/>
            <person name="Iseki S."/>
            <person name="Yambe S."/>
            <person name="Nishimura G."/>
            <person name="Koseki H."/>
            <person name="Shukunami C."/>
            <person name="Girisha K.M."/>
            <person name="Ikegawa S."/>
        </authorList>
    </citation>
    <scope>FUNCTION</scope>
    <scope>DEVELOPMENTAL STAGE</scope>
    <scope>DISRUPTION PHENOTYPE</scope>
</reference>
<evidence type="ECO:0000255" key="1"/>
<evidence type="ECO:0000269" key="2">
    <source>
    </source>
</evidence>
<evidence type="ECO:0000269" key="3">
    <source>
    </source>
</evidence>
<evidence type="ECO:0000269" key="4">
    <source>
    </source>
</evidence>
<evidence type="ECO:0000303" key="5">
    <source>
    </source>
</evidence>
<evidence type="ECO:0000303" key="6">
    <source>
    </source>
</evidence>
<evidence type="ECO:0000303" key="7">
    <source>
    </source>
</evidence>
<evidence type="ECO:0000303" key="8">
    <source>
    </source>
</evidence>
<evidence type="ECO:0000305" key="9"/>
<protein>
    <recommendedName>
        <fullName>Transmembrane protein 53</fullName>
    </recommendedName>
    <alternativeName>
        <fullName evidence="5 8">Nuclear envelope transmembrane protein 4</fullName>
    </alternativeName>
</protein>
<organism>
    <name type="scientific">Mus musculus</name>
    <name type="common">Mouse</name>
    <dbReference type="NCBI Taxonomy" id="10090"/>
    <lineage>
        <taxon>Eukaryota</taxon>
        <taxon>Metazoa</taxon>
        <taxon>Chordata</taxon>
        <taxon>Craniata</taxon>
        <taxon>Vertebrata</taxon>
        <taxon>Euteleostomi</taxon>
        <taxon>Mammalia</taxon>
        <taxon>Eutheria</taxon>
        <taxon>Euarchontoglires</taxon>
        <taxon>Glires</taxon>
        <taxon>Rodentia</taxon>
        <taxon>Myomorpha</taxon>
        <taxon>Muroidea</taxon>
        <taxon>Muridae</taxon>
        <taxon>Murinae</taxon>
        <taxon>Mus</taxon>
        <taxon>Mus</taxon>
    </lineage>
</organism>
<feature type="chain" id="PRO_0000284119" description="Transmembrane protein 53">
    <location>
        <begin position="1"/>
        <end position="276"/>
    </location>
</feature>
<feature type="transmembrane region" description="Helical" evidence="1">
    <location>
        <begin position="170"/>
        <end position="190"/>
    </location>
</feature>
<feature type="splice variant" id="VSP_024447" description="In isoform 3." evidence="7">
    <location>
        <begin position="1"/>
        <end position="15"/>
    </location>
</feature>
<feature type="splice variant" id="VSP_024448" description="In isoform 3." evidence="7">
    <original>PCWSQ</original>
    <variation>MNPDG</variation>
    <location>
        <begin position="16"/>
        <end position="20"/>
    </location>
</feature>
<feature type="splice variant" id="VSP_024449" description="In isoform 2." evidence="6">
    <original>K</original>
    <variation>SMEGDWEE</variation>
    <location>
        <position position="21"/>
    </location>
</feature>
<comment type="function">
    <text evidence="4">Negatively regulates bone morphogenetic protein (BMP) signaling in osteoblast lineage cells by blocking cytoplasm-nucleus translocation of phosphorylated SMAD1/5/9 proteins.</text>
</comment>
<comment type="subcellular location">
    <subcellularLocation>
        <location evidence="2 3">Nucleus outer membrane</location>
        <topology evidence="9">Single-pass membrane protein</topology>
    </subcellularLocation>
</comment>
<comment type="alternative products">
    <event type="alternative splicing"/>
    <isoform>
        <id>Q9D0Z3-1</id>
        <name>1</name>
        <sequence type="displayed"/>
    </isoform>
    <isoform>
        <id>Q9D0Z3-2</id>
        <name>2</name>
        <sequence type="described" ref="VSP_024449"/>
    </isoform>
    <isoform>
        <id>Q9D0Z3-3</id>
        <name>3</name>
        <sequence type="described" ref="VSP_024447 VSP_024448"/>
    </isoform>
</comment>
<comment type="tissue specificity">
    <text evidence="2">Expressed in liver (at protein level).</text>
</comment>
<comment type="developmental stage">
    <text evidence="4">Expressed in calvaria at 16.5 dpc.</text>
</comment>
<comment type="disruption phenotype">
    <text evidence="4">Knockout mice do not display severe skeletal abnormity at birth, but exhibit late-onset short stature. They show craniofacial dysmorphias, including hypertelorism, thickening of the calvaria and minor sclerosis of the skull base. Platyspondyly is also observed, as well as short limbs and underconstriction of the diaphyses.</text>
</comment>
<comment type="similarity">
    <text evidence="9">Belongs to the TMEM53 family.</text>
</comment>
<proteinExistence type="evidence at protein level"/>
<accession>Q9D0Z3</accession>
<accession>A2AE66</accession>
<accession>Q8VDW5</accession>
<accession>Q9DAF0</accession>
<name>TMM53_MOUSE</name>
<keyword id="KW-0025">Alternative splicing</keyword>
<keyword id="KW-0217">Developmental protein</keyword>
<keyword id="KW-0472">Membrane</keyword>
<keyword id="KW-0539">Nucleus</keyword>
<keyword id="KW-1185">Reference proteome</keyword>
<keyword id="KW-0812">Transmembrane</keyword>
<keyword id="KW-1133">Transmembrane helix</keyword>